<sequence length="195" mass="21929">MMRRASQERRTTETKIKLHLQLDESENISIRTGVGFFDHMLTLFAKHGRFGLQIEAVGDMFVDAHHTVEDVGIVLGNCLREVLQNKEGMNRYGAAYVPMDEALGFVAIDISGRSYLVFQGELVNPKLGDFDTELTEEFFRAVAHAAHITLHARILYGNNTHHKIEALFKAFGRALREAVDKNEKIVGINSTKGML</sequence>
<evidence type="ECO:0000255" key="1">
    <source>
        <dbReference type="HAMAP-Rule" id="MF_00076"/>
    </source>
</evidence>
<feature type="chain" id="PRO_0000336297" description="Imidazoleglycerol-phosphate dehydratase">
    <location>
        <begin position="1"/>
        <end position="195"/>
    </location>
</feature>
<proteinExistence type="inferred from homology"/>
<accession>A7GMU7</accession>
<protein>
    <recommendedName>
        <fullName evidence="1">Imidazoleglycerol-phosphate dehydratase</fullName>
        <shortName evidence="1">IGPD</shortName>
        <ecNumber evidence="1">4.2.1.19</ecNumber>
    </recommendedName>
</protein>
<dbReference type="EC" id="4.2.1.19" evidence="1"/>
<dbReference type="EMBL" id="CP000764">
    <property type="protein sequence ID" value="ABS21455.1"/>
    <property type="molecule type" value="Genomic_DNA"/>
</dbReference>
<dbReference type="SMR" id="A7GMU7"/>
<dbReference type="STRING" id="315749.Bcer98_1130"/>
<dbReference type="KEGG" id="bcy:Bcer98_1130"/>
<dbReference type="eggNOG" id="COG0131">
    <property type="taxonomic scope" value="Bacteria"/>
</dbReference>
<dbReference type="HOGENOM" id="CLU_044308_2_0_9"/>
<dbReference type="UniPathway" id="UPA00031">
    <property type="reaction ID" value="UER00011"/>
</dbReference>
<dbReference type="Proteomes" id="UP000002300">
    <property type="component" value="Chromosome"/>
</dbReference>
<dbReference type="GO" id="GO:0005737">
    <property type="term" value="C:cytoplasm"/>
    <property type="evidence" value="ECO:0007669"/>
    <property type="project" value="UniProtKB-SubCell"/>
</dbReference>
<dbReference type="GO" id="GO:0004424">
    <property type="term" value="F:imidazoleglycerol-phosphate dehydratase activity"/>
    <property type="evidence" value="ECO:0007669"/>
    <property type="project" value="UniProtKB-UniRule"/>
</dbReference>
<dbReference type="GO" id="GO:0000105">
    <property type="term" value="P:L-histidine biosynthetic process"/>
    <property type="evidence" value="ECO:0007669"/>
    <property type="project" value="UniProtKB-UniRule"/>
</dbReference>
<dbReference type="CDD" id="cd07914">
    <property type="entry name" value="IGPD"/>
    <property type="match status" value="1"/>
</dbReference>
<dbReference type="FunFam" id="3.30.230.40:FF:000001">
    <property type="entry name" value="Imidazoleglycerol-phosphate dehydratase HisB"/>
    <property type="match status" value="1"/>
</dbReference>
<dbReference type="FunFam" id="3.30.230.40:FF:000003">
    <property type="entry name" value="Imidazoleglycerol-phosphate dehydratase HisB"/>
    <property type="match status" value="1"/>
</dbReference>
<dbReference type="Gene3D" id="3.30.230.40">
    <property type="entry name" value="Imidazole glycerol phosphate dehydratase, domain 1"/>
    <property type="match status" value="2"/>
</dbReference>
<dbReference type="HAMAP" id="MF_00076">
    <property type="entry name" value="HisB"/>
    <property type="match status" value="1"/>
</dbReference>
<dbReference type="InterPro" id="IPR038494">
    <property type="entry name" value="IGPD_sf"/>
</dbReference>
<dbReference type="InterPro" id="IPR000807">
    <property type="entry name" value="ImidazoleglycerolP_deHydtase"/>
</dbReference>
<dbReference type="InterPro" id="IPR020565">
    <property type="entry name" value="ImidazoleglycerP_deHydtase_CS"/>
</dbReference>
<dbReference type="InterPro" id="IPR020568">
    <property type="entry name" value="Ribosomal_Su5_D2-typ_SF"/>
</dbReference>
<dbReference type="NCBIfam" id="NF002107">
    <property type="entry name" value="PRK00951.1-2"/>
    <property type="match status" value="1"/>
</dbReference>
<dbReference type="NCBIfam" id="NF002111">
    <property type="entry name" value="PRK00951.2-1"/>
    <property type="match status" value="1"/>
</dbReference>
<dbReference type="NCBIfam" id="NF002114">
    <property type="entry name" value="PRK00951.2-4"/>
    <property type="match status" value="1"/>
</dbReference>
<dbReference type="PANTHER" id="PTHR23133:SF2">
    <property type="entry name" value="IMIDAZOLEGLYCEROL-PHOSPHATE DEHYDRATASE"/>
    <property type="match status" value="1"/>
</dbReference>
<dbReference type="PANTHER" id="PTHR23133">
    <property type="entry name" value="IMIDAZOLEGLYCEROL-PHOSPHATE DEHYDRATASE HIS7"/>
    <property type="match status" value="1"/>
</dbReference>
<dbReference type="Pfam" id="PF00475">
    <property type="entry name" value="IGPD"/>
    <property type="match status" value="1"/>
</dbReference>
<dbReference type="SUPFAM" id="SSF54211">
    <property type="entry name" value="Ribosomal protein S5 domain 2-like"/>
    <property type="match status" value="2"/>
</dbReference>
<dbReference type="PROSITE" id="PS00954">
    <property type="entry name" value="IGP_DEHYDRATASE_1"/>
    <property type="match status" value="1"/>
</dbReference>
<dbReference type="PROSITE" id="PS00955">
    <property type="entry name" value="IGP_DEHYDRATASE_2"/>
    <property type="match status" value="1"/>
</dbReference>
<reference key="1">
    <citation type="journal article" date="2008" name="Chem. Biol. Interact.">
        <title>Extending the Bacillus cereus group genomics to putative food-borne pathogens of different toxicity.</title>
        <authorList>
            <person name="Lapidus A."/>
            <person name="Goltsman E."/>
            <person name="Auger S."/>
            <person name="Galleron N."/>
            <person name="Segurens B."/>
            <person name="Dossat C."/>
            <person name="Land M.L."/>
            <person name="Broussolle V."/>
            <person name="Brillard J."/>
            <person name="Guinebretiere M.-H."/>
            <person name="Sanchis V."/>
            <person name="Nguen-the C."/>
            <person name="Lereclus D."/>
            <person name="Richardson P."/>
            <person name="Wincker P."/>
            <person name="Weissenbach J."/>
            <person name="Ehrlich S.D."/>
            <person name="Sorokin A."/>
        </authorList>
    </citation>
    <scope>NUCLEOTIDE SEQUENCE [LARGE SCALE GENOMIC DNA]</scope>
    <source>
        <strain>DSM 22905 / CIP 110041 / 391-98 / NVH 391-98</strain>
    </source>
</reference>
<organism>
    <name type="scientific">Bacillus cytotoxicus (strain DSM 22905 / CIP 110041 / 391-98 / NVH 391-98)</name>
    <dbReference type="NCBI Taxonomy" id="315749"/>
    <lineage>
        <taxon>Bacteria</taxon>
        <taxon>Bacillati</taxon>
        <taxon>Bacillota</taxon>
        <taxon>Bacilli</taxon>
        <taxon>Bacillales</taxon>
        <taxon>Bacillaceae</taxon>
        <taxon>Bacillus</taxon>
        <taxon>Bacillus cereus group</taxon>
    </lineage>
</organism>
<comment type="catalytic activity">
    <reaction evidence="1">
        <text>D-erythro-1-(imidazol-4-yl)glycerol 3-phosphate = 3-(imidazol-4-yl)-2-oxopropyl phosphate + H2O</text>
        <dbReference type="Rhea" id="RHEA:11040"/>
        <dbReference type="ChEBI" id="CHEBI:15377"/>
        <dbReference type="ChEBI" id="CHEBI:57766"/>
        <dbReference type="ChEBI" id="CHEBI:58278"/>
        <dbReference type="EC" id="4.2.1.19"/>
    </reaction>
</comment>
<comment type="pathway">
    <text evidence="1">Amino-acid biosynthesis; L-histidine biosynthesis; L-histidine from 5-phospho-alpha-D-ribose 1-diphosphate: step 6/9.</text>
</comment>
<comment type="subcellular location">
    <subcellularLocation>
        <location evidence="1">Cytoplasm</location>
    </subcellularLocation>
</comment>
<comment type="similarity">
    <text evidence="1">Belongs to the imidazoleglycerol-phosphate dehydratase family.</text>
</comment>
<gene>
    <name evidence="1" type="primary">hisB</name>
    <name type="ordered locus">Bcer98_1130</name>
</gene>
<keyword id="KW-0028">Amino-acid biosynthesis</keyword>
<keyword id="KW-0963">Cytoplasm</keyword>
<keyword id="KW-0368">Histidine biosynthesis</keyword>
<keyword id="KW-0456">Lyase</keyword>
<name>HIS7_BACCN</name>